<evidence type="ECO:0000250" key="1">
    <source>
        <dbReference type="UniProtKB" id="O74346"/>
    </source>
</evidence>
<evidence type="ECO:0000255" key="2"/>
<evidence type="ECO:0000255" key="3">
    <source>
        <dbReference type="PROSITE-ProRule" id="PRU00498"/>
    </source>
</evidence>
<evidence type="ECO:0000255" key="4">
    <source>
        <dbReference type="PROSITE-ProRule" id="PRU01164"/>
    </source>
</evidence>
<evidence type="ECO:0000303" key="5">
    <source>
    </source>
</evidence>
<evidence type="ECO:0000305" key="6"/>
<evidence type="ECO:0000305" key="7">
    <source>
    </source>
</evidence>
<evidence type="ECO:0000312" key="8">
    <source>
        <dbReference type="PomBase" id="SPBC1348.08c"/>
    </source>
</evidence>
<name>YI48_SCHPO</name>
<feature type="signal peptide" evidence="2">
    <location>
        <begin position="1"/>
        <end position="27"/>
    </location>
</feature>
<feature type="chain" id="PRO_0000353813" description="Putative cell agglutination protein SPAC1348.08c">
    <location>
        <begin position="28"/>
        <end position="416"/>
    </location>
</feature>
<feature type="repeat" description="1" evidence="7">
    <location>
        <begin position="90"/>
        <end position="124"/>
    </location>
</feature>
<feature type="repeat" description="2" evidence="7">
    <location>
        <begin position="125"/>
        <end position="160"/>
    </location>
</feature>
<feature type="domain" description="PA14" evidence="4">
    <location>
        <begin position="224"/>
        <end position="390"/>
    </location>
</feature>
<feature type="region of interest" description="2 X 36 AA approximate tandem repeats" evidence="7">
    <location>
        <begin position="90"/>
        <end position="160"/>
    </location>
</feature>
<feature type="glycosylation site" description="N-linked (GlcNAc...) asparagine" evidence="3">
    <location>
        <position position="19"/>
    </location>
</feature>
<feature type="glycosylation site" description="N-linked (GlcNAc...) asparagine" evidence="3">
    <location>
        <position position="344"/>
    </location>
</feature>
<gene>
    <name evidence="8" type="ORF">SPAC1348.08c</name>
    <name type="ORF">SPBC1348.08c</name>
</gene>
<comment type="function">
    <text evidence="1">May be involved in agglutination during conjugation or other aspects of colony formation.</text>
</comment>
<comment type="subcellular location">
    <subcellularLocation>
        <location evidence="7">Cell surface</location>
    </subcellularLocation>
</comment>
<accession>P0CU04</accession>
<accession>Q9P329</accession>
<proteinExistence type="inferred from homology"/>
<protein>
    <recommendedName>
        <fullName evidence="6">Putative cell agglutination protein SPAC1348.08c</fullName>
    </recommendedName>
    <alternativeName>
        <fullName evidence="5">Adhesin SPAC1348.08c</fullName>
    </alternativeName>
</protein>
<sequence length="416" mass="44921">MNFFLYFRTIFLIQLYFFNYSTFGCSASSTSVQSDTTNQVSVSCPKYTTIYTSGTSPDTKTIYPESTSTKSITTSTQSHSSPVIVVSTVGTVTETTISGSTEYTTTIPAEGITSGTVEIVEPTAGTVTETITSGTLPFTTTLAQASGTVSGTVEIVSPKNNPTTVYSGTVATTETFSSSTVVVIPTAICDGVRGLEYAVYDYTISSSMNEFCYPKNGQTDVFAFNEPAYFGSSDLDQSSPLFTGVFSSTDDIPEWASSWYLPPYPPQASDMASTYCACKVIVYQFFLRIPETDTYTLVVNNVDDVFFGWFGDKAISGWSNNNFDAYSYWHESPNMGLGTVGMGNFTVGNYPEGYFLPVRFVVANGAYIGGFDFYFTSDSTGPLATTSYSYTKTCTQQFLPFGQGNGGVNGPTEKLS</sequence>
<reference key="1">
    <citation type="journal article" date="2002" name="Nature">
        <title>The genome sequence of Schizosaccharomyces pombe.</title>
        <authorList>
            <person name="Wood V."/>
            <person name="Gwilliam R."/>
            <person name="Rajandream M.A."/>
            <person name="Lyne M.H."/>
            <person name="Lyne R."/>
            <person name="Stewart A."/>
            <person name="Sgouros J.G."/>
            <person name="Peat N."/>
            <person name="Hayles J."/>
            <person name="Baker S.G."/>
            <person name="Basham D."/>
            <person name="Bowman S."/>
            <person name="Brooks K."/>
            <person name="Brown D."/>
            <person name="Brown S."/>
            <person name="Chillingworth T."/>
            <person name="Churcher C.M."/>
            <person name="Collins M."/>
            <person name="Connor R."/>
            <person name="Cronin A."/>
            <person name="Davis P."/>
            <person name="Feltwell T."/>
            <person name="Fraser A."/>
            <person name="Gentles S."/>
            <person name="Goble A."/>
            <person name="Hamlin N."/>
            <person name="Harris D.E."/>
            <person name="Hidalgo J."/>
            <person name="Hodgson G."/>
            <person name="Holroyd S."/>
            <person name="Hornsby T."/>
            <person name="Howarth S."/>
            <person name="Huckle E.J."/>
            <person name="Hunt S."/>
            <person name="Jagels K."/>
            <person name="James K.D."/>
            <person name="Jones L."/>
            <person name="Jones M."/>
            <person name="Leather S."/>
            <person name="McDonald S."/>
            <person name="McLean J."/>
            <person name="Mooney P."/>
            <person name="Moule S."/>
            <person name="Mungall K.L."/>
            <person name="Murphy L.D."/>
            <person name="Niblett D."/>
            <person name="Odell C."/>
            <person name="Oliver K."/>
            <person name="O'Neil S."/>
            <person name="Pearson D."/>
            <person name="Quail M.A."/>
            <person name="Rabbinowitsch E."/>
            <person name="Rutherford K.M."/>
            <person name="Rutter S."/>
            <person name="Saunders D."/>
            <person name="Seeger K."/>
            <person name="Sharp S."/>
            <person name="Skelton J."/>
            <person name="Simmonds M.N."/>
            <person name="Squares R."/>
            <person name="Squares S."/>
            <person name="Stevens K."/>
            <person name="Taylor K."/>
            <person name="Taylor R.G."/>
            <person name="Tivey A."/>
            <person name="Walsh S.V."/>
            <person name="Warren T."/>
            <person name="Whitehead S."/>
            <person name="Woodward J.R."/>
            <person name="Volckaert G."/>
            <person name="Aert R."/>
            <person name="Robben J."/>
            <person name="Grymonprez B."/>
            <person name="Weltjens I."/>
            <person name="Vanstreels E."/>
            <person name="Rieger M."/>
            <person name="Schaefer M."/>
            <person name="Mueller-Auer S."/>
            <person name="Gabel C."/>
            <person name="Fuchs M."/>
            <person name="Duesterhoeft A."/>
            <person name="Fritzc C."/>
            <person name="Holzer E."/>
            <person name="Moestl D."/>
            <person name="Hilbert H."/>
            <person name="Borzym K."/>
            <person name="Langer I."/>
            <person name="Beck A."/>
            <person name="Lehrach H."/>
            <person name="Reinhardt R."/>
            <person name="Pohl T.M."/>
            <person name="Eger P."/>
            <person name="Zimmermann W."/>
            <person name="Wedler H."/>
            <person name="Wambutt R."/>
            <person name="Purnelle B."/>
            <person name="Goffeau A."/>
            <person name="Cadieu E."/>
            <person name="Dreano S."/>
            <person name="Gloux S."/>
            <person name="Lelaure V."/>
            <person name="Mottier S."/>
            <person name="Galibert F."/>
            <person name="Aves S.J."/>
            <person name="Xiang Z."/>
            <person name="Hunt C."/>
            <person name="Moore K."/>
            <person name="Hurst S.M."/>
            <person name="Lucas M."/>
            <person name="Rochet M."/>
            <person name="Gaillardin C."/>
            <person name="Tallada V.A."/>
            <person name="Garzon A."/>
            <person name="Thode G."/>
            <person name="Daga R.R."/>
            <person name="Cruzado L."/>
            <person name="Jimenez J."/>
            <person name="Sanchez M."/>
            <person name="del Rey F."/>
            <person name="Benito J."/>
            <person name="Dominguez A."/>
            <person name="Revuelta J.L."/>
            <person name="Moreno S."/>
            <person name="Armstrong J."/>
            <person name="Forsburg S.L."/>
            <person name="Cerutti L."/>
            <person name="Lowe T."/>
            <person name="McCombie W.R."/>
            <person name="Paulsen I."/>
            <person name="Potashkin J."/>
            <person name="Shpakovski G.V."/>
            <person name="Ussery D."/>
            <person name="Barrell B.G."/>
            <person name="Nurse P."/>
        </authorList>
    </citation>
    <scope>NUCLEOTIDE SEQUENCE [LARGE SCALE GENOMIC DNA]</scope>
    <source>
        <strain>972 / ATCC 24843</strain>
    </source>
</reference>
<reference key="2">
    <citation type="journal article" date="2008" name="Fungal Genet. Biol.">
        <title>Molecular phylogenetics of ascomycotal adhesins--a novel family of putative cell-surface adhesive proteins in fission yeasts.</title>
        <authorList>
            <person name="Linder T."/>
            <person name="Gustafsson C.M."/>
        </authorList>
    </citation>
    <scope>DOMAIN</scope>
    <scope>REPEATS</scope>
</reference>
<organism>
    <name type="scientific">Schizosaccharomyces pombe (strain 972 / ATCC 24843)</name>
    <name type="common">Fission yeast</name>
    <dbReference type="NCBI Taxonomy" id="284812"/>
    <lineage>
        <taxon>Eukaryota</taxon>
        <taxon>Fungi</taxon>
        <taxon>Dikarya</taxon>
        <taxon>Ascomycota</taxon>
        <taxon>Taphrinomycotina</taxon>
        <taxon>Schizosaccharomycetes</taxon>
        <taxon>Schizosaccharomycetales</taxon>
        <taxon>Schizosaccharomycetaceae</taxon>
        <taxon>Schizosaccharomyces</taxon>
    </lineage>
</organism>
<dbReference type="EMBL" id="CU329671">
    <property type="protein sequence ID" value="CAB94275.1"/>
    <property type="molecule type" value="Genomic_DNA"/>
</dbReference>
<dbReference type="PIR" id="T50279">
    <property type="entry name" value="T50279"/>
</dbReference>
<dbReference type="RefSeq" id="NP_592770.1">
    <property type="nucleotide sequence ID" value="NM_001020933.2"/>
</dbReference>
<dbReference type="STRING" id="284812.P0CU04"/>
<dbReference type="EnsemblFungi" id="SPAC977.07c.1">
    <property type="protein sequence ID" value="SPAC977.07c.1:pep"/>
    <property type="gene ID" value="SPAC977.07c"/>
</dbReference>
<dbReference type="EnsemblFungi" id="SPBC1348.08c.1">
    <property type="protein sequence ID" value="SPBC1348.08c.1:pep"/>
    <property type="gene ID" value="SPBC1348.08c"/>
</dbReference>
<dbReference type="KEGG" id="spo:2541886"/>
<dbReference type="KEGG" id="spo:2543047"/>
<dbReference type="PomBase" id="SPBC1348.08c"/>
<dbReference type="VEuPathDB" id="FungiDB:SPAC977.07c"/>
<dbReference type="VEuPathDB" id="FungiDB:SPBC1348.08c"/>
<dbReference type="InParanoid" id="P0CU04"/>
<dbReference type="PhylomeDB" id="P0CU04"/>
<dbReference type="PRO" id="PR:P0CU04"/>
<dbReference type="Proteomes" id="UP000002485">
    <property type="component" value="Chromosome II"/>
</dbReference>
<dbReference type="GO" id="GO:0009986">
    <property type="term" value="C:cell surface"/>
    <property type="evidence" value="ECO:0007669"/>
    <property type="project" value="UniProtKB-SubCell"/>
</dbReference>
<dbReference type="GO" id="GO:0098609">
    <property type="term" value="P:cell-cell adhesion"/>
    <property type="evidence" value="ECO:0000304"/>
    <property type="project" value="PomBase"/>
</dbReference>
<dbReference type="FunFam" id="2.60.120.1560:FF:000006">
    <property type="entry name" value="Putative cell agglutination protein SPAC1348.08c"/>
    <property type="match status" value="1"/>
</dbReference>
<dbReference type="Gene3D" id="2.60.120.1560">
    <property type="match status" value="1"/>
</dbReference>
<dbReference type="InterPro" id="IPR018871">
    <property type="entry name" value="GLEYA_adhesin_domain"/>
</dbReference>
<dbReference type="InterPro" id="IPR037524">
    <property type="entry name" value="PA14/GLEYA"/>
</dbReference>
<dbReference type="InterPro" id="IPR051905">
    <property type="entry name" value="S_pombe_Mam3/Map4"/>
</dbReference>
<dbReference type="PANTHER" id="PTHR31492">
    <property type="entry name" value="M CELL-TYPE AGGLUTINATION PROTEIN MAM3-RELATED"/>
    <property type="match status" value="1"/>
</dbReference>
<dbReference type="PANTHER" id="PTHR31492:SF14">
    <property type="entry name" value="M CELL-TYPE AGGLUTINATION PROTEIN MAM3-RELATED"/>
    <property type="match status" value="1"/>
</dbReference>
<dbReference type="Pfam" id="PF10528">
    <property type="entry name" value="GLEYA"/>
    <property type="match status" value="1"/>
</dbReference>
<dbReference type="PROSITE" id="PS51820">
    <property type="entry name" value="PA14"/>
    <property type="match status" value="1"/>
</dbReference>
<keyword id="KW-0325">Glycoprotein</keyword>
<keyword id="KW-1185">Reference proteome</keyword>
<keyword id="KW-0677">Repeat</keyword>
<keyword id="KW-0732">Signal</keyword>